<accession>P0DX56</accession>
<reference key="1">
    <citation type="journal article" date="2019" name="Toxins">
        <title>Isolation and characterization of insecticidal toxins from the venom of the North African scorpion, Buthacus leptochelys.</title>
        <authorList>
            <person name="Yoshimoto Y."/>
            <person name="Miyashita M."/>
            <person name="Abdel-Wahab M."/>
            <person name="Sarhan M."/>
            <person name="Nakagawa Y."/>
            <person name="Miyagawa H."/>
        </authorList>
    </citation>
    <scope>PROTEIN SEQUENCE</scope>
    <scope>FUNCTION</scope>
    <scope>BIOASSAY</scope>
    <scope>SUBCELLULAR LOCATION</scope>
    <scope>MASS SPECTROMETRY</scope>
    <scope>3D-STRUCTURE MODELING</scope>
    <source>
        <tissue>Venom</tissue>
    </source>
</reference>
<comment type="function">
    <text evidence="1 3">Alpha toxins bind voltage-independently at site-3 of sodium channels (Nav) and inhibit the inactivation of the activated channels, thereby blocking neuronal transmission (By similarity). Is highly toxic to insects (tested on the crickets A.domesticus) (PubMed:31027216). This peptide may also be toxic to mammals, since it is similar to alpha-like toxins that are active on both insect and mammalian sodium channels (By similarity).</text>
</comment>
<comment type="subcellular location">
    <subcellularLocation>
        <location evidence="3">Secreted</location>
    </subcellularLocation>
</comment>
<comment type="tissue specificity">
    <text evidence="6">Expressed by the venom gland.</text>
</comment>
<comment type="domain">
    <text evidence="5">Has the structural arrangement of an alpha-helix connected to antiparallel beta-sheets by disulfide bonds (CS-alpha/beta).</text>
</comment>
<comment type="mass spectrometry" mass="7107.2" method="MALDI" evidence="3">
    <text>Monoisotopic mass.</text>
</comment>
<comment type="similarity">
    <text evidence="5">Belongs to the long (4 C-C) scorpion toxin superfamily. Sodium channel inhibitor family. Alpha subfamily.</text>
</comment>
<proteinExistence type="evidence at protein level"/>
<evidence type="ECO:0000250" key="1">
    <source>
        <dbReference type="UniProtKB" id="P56678"/>
    </source>
</evidence>
<evidence type="ECO:0000255" key="2">
    <source>
        <dbReference type="PROSITE-ProRule" id="PRU01210"/>
    </source>
</evidence>
<evidence type="ECO:0000269" key="3">
    <source>
    </source>
</evidence>
<evidence type="ECO:0000303" key="4">
    <source>
    </source>
</evidence>
<evidence type="ECO:0000305" key="5"/>
<evidence type="ECO:0000305" key="6">
    <source>
    </source>
</evidence>
<keyword id="KW-0027">Amidation</keyword>
<keyword id="KW-0903">Direct protein sequencing</keyword>
<keyword id="KW-1015">Disulfide bond</keyword>
<keyword id="KW-0872">Ion channel impairing toxin</keyword>
<keyword id="KW-0528">Neurotoxin</keyword>
<keyword id="KW-0964">Secreted</keyword>
<keyword id="KW-0800">Toxin</keyword>
<keyword id="KW-0738">Voltage-gated sodium channel impairing toxin</keyword>
<protein>
    <recommendedName>
        <fullName evidence="4">Toxin Bl-1</fullName>
    </recommendedName>
</protein>
<organism>
    <name type="scientific">Buthacus leptochelys</name>
    <name type="common">Egyptian fat-tailed scorpion</name>
    <name type="synonym">Androctonus leptochelys</name>
    <dbReference type="NCBI Taxonomy" id="2807509"/>
    <lineage>
        <taxon>Eukaryota</taxon>
        <taxon>Metazoa</taxon>
        <taxon>Ecdysozoa</taxon>
        <taxon>Arthropoda</taxon>
        <taxon>Chelicerata</taxon>
        <taxon>Arachnida</taxon>
        <taxon>Scorpiones</taxon>
        <taxon>Buthida</taxon>
        <taxon>Buthoidea</taxon>
        <taxon>Buthidae</taxon>
        <taxon>Buthacus</taxon>
    </lineage>
</organism>
<feature type="chain" id="PRO_0000459138" description="Toxin Bl-1" evidence="3">
    <location>
        <begin position="1"/>
        <end position="67"/>
    </location>
</feature>
<feature type="domain" description="LCN-type CS-alpha/beta" evidence="2">
    <location>
        <begin position="2"/>
        <end position="66"/>
    </location>
</feature>
<feature type="modified residue" description="Threonine amide" evidence="1">
    <location>
        <position position="67"/>
    </location>
</feature>
<feature type="disulfide bond" evidence="2">
    <location>
        <begin position="12"/>
        <end position="65"/>
    </location>
</feature>
<feature type="disulfide bond" evidence="2">
    <location>
        <begin position="16"/>
        <end position="37"/>
    </location>
</feature>
<feature type="disulfide bond" evidence="2">
    <location>
        <begin position="23"/>
        <end position="47"/>
    </location>
</feature>
<feature type="disulfide bond" evidence="2">
    <location>
        <begin position="27"/>
        <end position="49"/>
    </location>
</feature>
<dbReference type="SMR" id="P0DX56"/>
<dbReference type="GO" id="GO:0005576">
    <property type="term" value="C:extracellular region"/>
    <property type="evidence" value="ECO:0007669"/>
    <property type="project" value="UniProtKB-SubCell"/>
</dbReference>
<dbReference type="GO" id="GO:0019871">
    <property type="term" value="F:sodium channel inhibitor activity"/>
    <property type="evidence" value="ECO:0007669"/>
    <property type="project" value="InterPro"/>
</dbReference>
<dbReference type="GO" id="GO:0090729">
    <property type="term" value="F:toxin activity"/>
    <property type="evidence" value="ECO:0007669"/>
    <property type="project" value="UniProtKB-KW"/>
</dbReference>
<dbReference type="GO" id="GO:0006952">
    <property type="term" value="P:defense response"/>
    <property type="evidence" value="ECO:0007669"/>
    <property type="project" value="InterPro"/>
</dbReference>
<dbReference type="CDD" id="cd23106">
    <property type="entry name" value="neurotoxins_LC_scorpion"/>
    <property type="match status" value="1"/>
</dbReference>
<dbReference type="Gene3D" id="3.30.30.10">
    <property type="entry name" value="Knottin, scorpion toxin-like"/>
    <property type="match status" value="1"/>
</dbReference>
<dbReference type="InterPro" id="IPR044062">
    <property type="entry name" value="LCN-type_CS_alpha_beta_dom"/>
</dbReference>
<dbReference type="InterPro" id="IPR003614">
    <property type="entry name" value="Scorpion_toxin-like"/>
</dbReference>
<dbReference type="InterPro" id="IPR036574">
    <property type="entry name" value="Scorpion_toxin-like_sf"/>
</dbReference>
<dbReference type="InterPro" id="IPR018218">
    <property type="entry name" value="Scorpion_toxinL"/>
</dbReference>
<dbReference type="InterPro" id="IPR002061">
    <property type="entry name" value="Scorpion_toxinL/defensin"/>
</dbReference>
<dbReference type="Pfam" id="PF00537">
    <property type="entry name" value="Toxin_3"/>
    <property type="match status" value="1"/>
</dbReference>
<dbReference type="PRINTS" id="PR00285">
    <property type="entry name" value="SCORPNTOXIN"/>
</dbReference>
<dbReference type="SMART" id="SM00505">
    <property type="entry name" value="Knot1"/>
    <property type="match status" value="1"/>
</dbReference>
<dbReference type="SUPFAM" id="SSF57095">
    <property type="entry name" value="Scorpion toxin-like"/>
    <property type="match status" value="1"/>
</dbReference>
<dbReference type="PROSITE" id="PS51863">
    <property type="entry name" value="LCN_CSAB"/>
    <property type="match status" value="1"/>
</dbReference>
<sequence length="67" mass="7121">ARDGYISQPENCVYHCFPGSSGCDTLCKEKGGTGGHCGYKEGRGLACWCLELPDNVGIIVDGIKCHT</sequence>
<name>TX1_BUTLE</name>